<evidence type="ECO:0000255" key="1">
    <source>
        <dbReference type="HAMAP-Rule" id="MF_00142"/>
    </source>
</evidence>
<name>CYAY_PSEP1</name>
<keyword id="KW-0408">Iron</keyword>
<keyword id="KW-0479">Metal-binding</keyword>
<protein>
    <recommendedName>
        <fullName evidence="1">Iron-sulfur cluster assembly protein CyaY</fullName>
    </recommendedName>
</protein>
<dbReference type="EMBL" id="CP000712">
    <property type="protein sequence ID" value="ABQ81252.1"/>
    <property type="molecule type" value="Genomic_DNA"/>
</dbReference>
<dbReference type="SMR" id="A5WAU2"/>
<dbReference type="KEGG" id="ppf:Pput_5134"/>
<dbReference type="eggNOG" id="COG1965">
    <property type="taxonomic scope" value="Bacteria"/>
</dbReference>
<dbReference type="HOGENOM" id="CLU_080880_3_0_6"/>
<dbReference type="GO" id="GO:0005829">
    <property type="term" value="C:cytosol"/>
    <property type="evidence" value="ECO:0007669"/>
    <property type="project" value="TreeGrafter"/>
</dbReference>
<dbReference type="GO" id="GO:0008199">
    <property type="term" value="F:ferric iron binding"/>
    <property type="evidence" value="ECO:0007669"/>
    <property type="project" value="InterPro"/>
</dbReference>
<dbReference type="GO" id="GO:0008198">
    <property type="term" value="F:ferrous iron binding"/>
    <property type="evidence" value="ECO:0007669"/>
    <property type="project" value="TreeGrafter"/>
</dbReference>
<dbReference type="GO" id="GO:0016226">
    <property type="term" value="P:iron-sulfur cluster assembly"/>
    <property type="evidence" value="ECO:0007669"/>
    <property type="project" value="UniProtKB-UniRule"/>
</dbReference>
<dbReference type="Gene3D" id="3.30.920.10">
    <property type="entry name" value="Frataxin/CyaY"/>
    <property type="match status" value="1"/>
</dbReference>
<dbReference type="HAMAP" id="MF_00142">
    <property type="entry name" value="CyaY"/>
    <property type="match status" value="1"/>
</dbReference>
<dbReference type="InterPro" id="IPR047584">
    <property type="entry name" value="CyaY"/>
</dbReference>
<dbReference type="InterPro" id="IPR002908">
    <property type="entry name" value="Frataxin/CyaY"/>
</dbReference>
<dbReference type="InterPro" id="IPR036524">
    <property type="entry name" value="Frataxin/CyaY_sf"/>
</dbReference>
<dbReference type="InterPro" id="IPR020895">
    <property type="entry name" value="Frataxin_CS"/>
</dbReference>
<dbReference type="NCBIfam" id="TIGR03421">
    <property type="entry name" value="FeS_CyaY"/>
    <property type="match status" value="1"/>
</dbReference>
<dbReference type="PANTHER" id="PTHR16821">
    <property type="entry name" value="FRATAXIN"/>
    <property type="match status" value="1"/>
</dbReference>
<dbReference type="PANTHER" id="PTHR16821:SF2">
    <property type="entry name" value="FRATAXIN, MITOCHONDRIAL"/>
    <property type="match status" value="1"/>
</dbReference>
<dbReference type="Pfam" id="PF01491">
    <property type="entry name" value="Frataxin_Cyay"/>
    <property type="match status" value="1"/>
</dbReference>
<dbReference type="SMART" id="SM01219">
    <property type="entry name" value="Frataxin_Cyay"/>
    <property type="match status" value="1"/>
</dbReference>
<dbReference type="SUPFAM" id="SSF55387">
    <property type="entry name" value="Frataxin/Nqo15-like"/>
    <property type="match status" value="1"/>
</dbReference>
<dbReference type="PROSITE" id="PS01344">
    <property type="entry name" value="FRATAXIN_1"/>
    <property type="match status" value="1"/>
</dbReference>
<dbReference type="PROSITE" id="PS50810">
    <property type="entry name" value="FRATAXIN_2"/>
    <property type="match status" value="1"/>
</dbReference>
<feature type="chain" id="PRO_1000010942" description="Iron-sulfur cluster assembly protein CyaY">
    <location>
        <begin position="1"/>
        <end position="110"/>
    </location>
</feature>
<accession>A5WAU2</accession>
<proteinExistence type="inferred from homology"/>
<gene>
    <name evidence="1" type="primary">cyaY</name>
    <name type="ordered locus">Pput_5134</name>
</gene>
<reference key="1">
    <citation type="submission" date="2007-05" db="EMBL/GenBank/DDBJ databases">
        <title>Complete sequence of Pseudomonas putida F1.</title>
        <authorList>
            <consortium name="US DOE Joint Genome Institute"/>
            <person name="Copeland A."/>
            <person name="Lucas S."/>
            <person name="Lapidus A."/>
            <person name="Barry K."/>
            <person name="Detter J.C."/>
            <person name="Glavina del Rio T."/>
            <person name="Hammon N."/>
            <person name="Israni S."/>
            <person name="Dalin E."/>
            <person name="Tice H."/>
            <person name="Pitluck S."/>
            <person name="Chain P."/>
            <person name="Malfatti S."/>
            <person name="Shin M."/>
            <person name="Vergez L."/>
            <person name="Schmutz J."/>
            <person name="Larimer F."/>
            <person name="Land M."/>
            <person name="Hauser L."/>
            <person name="Kyrpides N."/>
            <person name="Lykidis A."/>
            <person name="Parales R."/>
            <person name="Richardson P."/>
        </authorList>
    </citation>
    <scope>NUCLEOTIDE SEQUENCE [LARGE SCALE GENOMIC DNA]</scope>
    <source>
        <strain>ATCC 700007 / DSM 6899 / JCM 31910 / BCRC 17059 / LMG 24140 / F1</strain>
    </source>
</reference>
<organism>
    <name type="scientific">Pseudomonas putida (strain ATCC 700007 / DSM 6899 / JCM 31910 / BCRC 17059 / LMG 24140 / F1)</name>
    <dbReference type="NCBI Taxonomy" id="351746"/>
    <lineage>
        <taxon>Bacteria</taxon>
        <taxon>Pseudomonadati</taxon>
        <taxon>Pseudomonadota</taxon>
        <taxon>Gammaproteobacteria</taxon>
        <taxon>Pseudomonadales</taxon>
        <taxon>Pseudomonadaceae</taxon>
        <taxon>Pseudomonas</taxon>
    </lineage>
</organism>
<sequence>MSLSEARFHDLVDATQQALEDLFDESGLDLDMENSAGVLTVKFEGGAQLIFSRQEPLRQLWLADRSGGFHFDYDEDSGKWVCEKSEELLGEMLERIVWERAGEKLDFDEI</sequence>
<comment type="function">
    <text evidence="1">Involved in iron-sulfur (Fe-S) cluster assembly. May act as a regulator of Fe-S biogenesis.</text>
</comment>
<comment type="similarity">
    <text evidence="1">Belongs to the frataxin family.</text>
</comment>